<accession>P16675</accession>
<accession>Q8VEF6</accession>
<evidence type="ECO:0000250" key="1"/>
<evidence type="ECO:0000255" key="2">
    <source>
        <dbReference type="PROSITE-ProRule" id="PRU10074"/>
    </source>
</evidence>
<evidence type="ECO:0000255" key="3">
    <source>
        <dbReference type="PROSITE-ProRule" id="PRU10075"/>
    </source>
</evidence>
<evidence type="ECO:0000269" key="4">
    <source>
    </source>
</evidence>
<evidence type="ECO:0000305" key="5"/>
<keyword id="KW-0002">3D-structure</keyword>
<keyword id="KW-0121">Carboxypeptidase</keyword>
<keyword id="KW-1015">Disulfide bond</keyword>
<keyword id="KW-0325">Glycoprotein</keyword>
<keyword id="KW-0378">Hydrolase</keyword>
<keyword id="KW-0458">Lysosome</keyword>
<keyword id="KW-0645">Protease</keyword>
<keyword id="KW-1185">Reference proteome</keyword>
<keyword id="KW-0732">Signal</keyword>
<keyword id="KW-0865">Zymogen</keyword>
<comment type="function">
    <text>Protective protein appears to be essential for both the activity of beta-galactosidase and neuraminidase, it associates with these enzymes and exerts a protective function necessary for their stability and activity. This protein is also a carboxypeptidase and can deamidate tachykinins.</text>
</comment>
<comment type="catalytic activity">
    <reaction evidence="2 3">
        <text>Release of a C-terminal amino acid with broad specificity.</text>
        <dbReference type="EC" id="3.4.16.5"/>
    </reaction>
</comment>
<comment type="subunit">
    <text evidence="1">Heterodimer of a 32 kDa chain and a 20 kDa chain; disulfide-linked.</text>
</comment>
<comment type="subcellular location">
    <subcellularLocation>
        <location>Lysosome</location>
    </subcellularLocation>
</comment>
<comment type="similarity">
    <text evidence="5">Belongs to the peptidase S10 family.</text>
</comment>
<dbReference type="EC" id="3.4.16.5"/>
<dbReference type="EMBL" id="J05261">
    <property type="protein sequence ID" value="AAA39982.1"/>
    <property type="molecule type" value="mRNA"/>
</dbReference>
<dbReference type="EMBL" id="BC018534">
    <property type="protein sequence ID" value="AAH18534.1"/>
    <property type="molecule type" value="mRNA"/>
</dbReference>
<dbReference type="CCDS" id="CCDS17062.1"/>
<dbReference type="PIR" id="A35732">
    <property type="entry name" value="A35732"/>
</dbReference>
<dbReference type="RefSeq" id="NP_001033581.1">
    <property type="nucleotide sequence ID" value="NM_001038492.2"/>
</dbReference>
<dbReference type="PDB" id="7KDV">
    <property type="method" value="EM"/>
    <property type="resolution" value="4.59 A"/>
    <property type="chains" value="B/D/F/H/J/L=24-474"/>
</dbReference>
<dbReference type="PDBsum" id="7KDV"/>
<dbReference type="EMDB" id="EMD-22830"/>
<dbReference type="SMR" id="P16675"/>
<dbReference type="BioGRID" id="202325">
    <property type="interactions" value="21"/>
</dbReference>
<dbReference type="FunCoup" id="P16675">
    <property type="interactions" value="2441"/>
</dbReference>
<dbReference type="STRING" id="10090.ENSMUSP00000099381"/>
<dbReference type="ChEMBL" id="CHEMBL3259490"/>
<dbReference type="ESTHER" id="mouse-Ppgb">
    <property type="family name" value="Carboxypeptidase_S10"/>
</dbReference>
<dbReference type="MEROPS" id="S10.002"/>
<dbReference type="GlyConnect" id="2492">
    <property type="glycosylation" value="5 N-Linked glycans (2 sites)"/>
</dbReference>
<dbReference type="GlyCosmos" id="P16675">
    <property type="glycosylation" value="2 sites, 5 glycans"/>
</dbReference>
<dbReference type="GlyGen" id="P16675">
    <property type="glycosylation" value="3 sites, 7 N-linked glycans (2 sites), 1 O-linked glycan (1 site)"/>
</dbReference>
<dbReference type="iPTMnet" id="P16675"/>
<dbReference type="PhosphoSitePlus" id="P16675"/>
<dbReference type="SwissPalm" id="P16675"/>
<dbReference type="CPTAC" id="non-CPTAC-3865"/>
<dbReference type="jPOST" id="P16675"/>
<dbReference type="PaxDb" id="10090-ENSMUSP00000099382"/>
<dbReference type="PeptideAtlas" id="P16675"/>
<dbReference type="ProteomicsDB" id="291713"/>
<dbReference type="Pumba" id="P16675"/>
<dbReference type="Antibodypedia" id="27832">
    <property type="antibodies" value="475 antibodies from 36 providers"/>
</dbReference>
<dbReference type="DNASU" id="19025"/>
<dbReference type="Ensembl" id="ENSMUST00000103093.10">
    <property type="protein sequence ID" value="ENSMUSP00000099382.4"/>
    <property type="gene ID" value="ENSMUSG00000017760.17"/>
</dbReference>
<dbReference type="GeneID" id="19025"/>
<dbReference type="KEGG" id="mmu:19025"/>
<dbReference type="UCSC" id="uc008nwm.2">
    <property type="organism name" value="mouse"/>
</dbReference>
<dbReference type="AGR" id="MGI:97748"/>
<dbReference type="CTD" id="5476"/>
<dbReference type="MGI" id="MGI:97748">
    <property type="gene designation" value="Ctsa"/>
</dbReference>
<dbReference type="VEuPathDB" id="HostDB:ENSMUSG00000017760"/>
<dbReference type="eggNOG" id="KOG1282">
    <property type="taxonomic scope" value="Eukaryota"/>
</dbReference>
<dbReference type="GeneTree" id="ENSGT00880000138014"/>
<dbReference type="HOGENOM" id="CLU_008523_13_3_1"/>
<dbReference type="InParanoid" id="P16675"/>
<dbReference type="OrthoDB" id="443318at2759"/>
<dbReference type="PhylomeDB" id="P16675"/>
<dbReference type="TreeFam" id="TF323769"/>
<dbReference type="BRENDA" id="3.4.16.5">
    <property type="organism ID" value="3474"/>
</dbReference>
<dbReference type="Reactome" id="R-MMU-2132295">
    <property type="pathway name" value="MHC class II antigen presentation"/>
</dbReference>
<dbReference type="Reactome" id="R-MMU-4085001">
    <property type="pathway name" value="Sialic acid metabolism"/>
</dbReference>
<dbReference type="Reactome" id="R-MMU-6798695">
    <property type="pathway name" value="Neutrophil degranulation"/>
</dbReference>
<dbReference type="Reactome" id="R-MMU-9840310">
    <property type="pathway name" value="Glycosphingolipid catabolism"/>
</dbReference>
<dbReference type="BioGRID-ORCS" id="19025">
    <property type="hits" value="4 hits in 80 CRISPR screens"/>
</dbReference>
<dbReference type="ChiTaRS" id="Ctsa">
    <property type="organism name" value="mouse"/>
</dbReference>
<dbReference type="PRO" id="PR:P16675"/>
<dbReference type="Proteomes" id="UP000000589">
    <property type="component" value="Chromosome 2"/>
</dbReference>
<dbReference type="RNAct" id="P16675">
    <property type="molecule type" value="protein"/>
</dbReference>
<dbReference type="Bgee" id="ENSMUSG00000017760">
    <property type="expression patterns" value="Expressed in stroma of bone marrow and 272 other cell types or tissues"/>
</dbReference>
<dbReference type="ExpressionAtlas" id="P16675">
    <property type="expression patterns" value="baseline and differential"/>
</dbReference>
<dbReference type="GO" id="GO:0005764">
    <property type="term" value="C:lysosome"/>
    <property type="evidence" value="ECO:0007669"/>
    <property type="project" value="UniProtKB-SubCell"/>
</dbReference>
<dbReference type="GO" id="GO:0005739">
    <property type="term" value="C:mitochondrion"/>
    <property type="evidence" value="ECO:0007005"/>
    <property type="project" value="MGI"/>
</dbReference>
<dbReference type="GO" id="GO:0004185">
    <property type="term" value="F:serine-type carboxypeptidase activity"/>
    <property type="evidence" value="ECO:0000250"/>
    <property type="project" value="ParkinsonsUK-UCL"/>
</dbReference>
<dbReference type="GO" id="GO:1904715">
    <property type="term" value="P:negative regulation of chaperone-mediated autophagy"/>
    <property type="evidence" value="ECO:0000315"/>
    <property type="project" value="ParkinsonsUK-UCL"/>
</dbReference>
<dbReference type="GO" id="GO:0006508">
    <property type="term" value="P:proteolysis"/>
    <property type="evidence" value="ECO:0000250"/>
    <property type="project" value="ParkinsonsUK-UCL"/>
</dbReference>
<dbReference type="GO" id="GO:0031647">
    <property type="term" value="P:regulation of protein stability"/>
    <property type="evidence" value="ECO:0000315"/>
    <property type="project" value="ParkinsonsUK-UCL"/>
</dbReference>
<dbReference type="FunFam" id="3.40.50.1820:FF:000335">
    <property type="entry name" value="Carboxypeptidase"/>
    <property type="match status" value="1"/>
</dbReference>
<dbReference type="Gene3D" id="3.40.50.1820">
    <property type="entry name" value="alpha/beta hydrolase"/>
    <property type="match status" value="2"/>
</dbReference>
<dbReference type="InterPro" id="IPR029058">
    <property type="entry name" value="AB_hydrolase_fold"/>
</dbReference>
<dbReference type="InterPro" id="IPR001563">
    <property type="entry name" value="Peptidase_S10"/>
</dbReference>
<dbReference type="InterPro" id="IPR033124">
    <property type="entry name" value="Ser_caboxypep_his_AS"/>
</dbReference>
<dbReference type="InterPro" id="IPR018202">
    <property type="entry name" value="Ser_caboxypep_ser_AS"/>
</dbReference>
<dbReference type="PANTHER" id="PTHR11802:SF502">
    <property type="entry name" value="LYSOSOMAL PROTECTIVE PROTEIN"/>
    <property type="match status" value="1"/>
</dbReference>
<dbReference type="PANTHER" id="PTHR11802">
    <property type="entry name" value="SERINE PROTEASE FAMILY S10 SERINE CARBOXYPEPTIDASE"/>
    <property type="match status" value="1"/>
</dbReference>
<dbReference type="Pfam" id="PF00450">
    <property type="entry name" value="Peptidase_S10"/>
    <property type="match status" value="1"/>
</dbReference>
<dbReference type="PRINTS" id="PR00724">
    <property type="entry name" value="CRBOXYPTASEC"/>
</dbReference>
<dbReference type="SUPFAM" id="SSF53474">
    <property type="entry name" value="alpha/beta-Hydrolases"/>
    <property type="match status" value="1"/>
</dbReference>
<dbReference type="PROSITE" id="PS00560">
    <property type="entry name" value="CARBOXYPEPT_SER_HIS"/>
    <property type="match status" value="1"/>
</dbReference>
<dbReference type="PROSITE" id="PS00131">
    <property type="entry name" value="CARBOXYPEPT_SER_SER"/>
    <property type="match status" value="1"/>
</dbReference>
<sequence length="474" mass="53844">MPGTALSPLLLLLLLSWASRNEAAPDQDEIDCLPGLAKQPSFRQYSGYLRASDSKHFHYWFVESQNDPKNSPVVLWLNGGPGCSSLDGLLTEHGPFLIQPDGVTLEYNPYAWNLIANVLYIESPAGVGFSYSDDKMYVTNDTEVAENNYEALKDFFRLFPEYKDNKLFLTGESYAGIYIPTLAVLVMQDPSMNLQGLAVGNGLASYEQNDNSLVYFAYYHGLLGNRLWTSLQTHCCAQNKCNFYDNKDPECVNNLLEVSRIVGKSGLNIYNLYAPCAGGVPGRHRYEDTLVVQDFGNIFTRLPLKRRFPEALMRSGDKVRLDPPCTNTTAPSNYLNNPYVRKALHIPESLPRWDMCNFLVNLQYRRLYQSMNSQYLKLLSSQKYQILLYNGDVDMACNFMGDEWFVDSLNQKMEVQRRPWLVDYGESGEQVAGFVKECSHITFLTIKGAGHMVPTDKPRAAFTMFSRFLNKEPY</sequence>
<reference key="1">
    <citation type="journal article" date="1990" name="J. Biol. Chem.">
        <title>Mouse 'protective protein'. cDNA cloning, sequence comparison, and expression.</title>
        <authorList>
            <person name="Galjart N.J."/>
            <person name="Gillemans N."/>
            <person name="Meijer D."/>
            <person name="D'Azzo A."/>
        </authorList>
    </citation>
    <scope>NUCLEOTIDE SEQUENCE [MRNA]</scope>
</reference>
<reference key="2">
    <citation type="journal article" date="2004" name="Genome Res.">
        <title>The status, quality, and expansion of the NIH full-length cDNA project: the Mammalian Gene Collection (MGC).</title>
        <authorList>
            <consortium name="The MGC Project Team"/>
        </authorList>
    </citation>
    <scope>NUCLEOTIDE SEQUENCE [LARGE SCALE MRNA]</scope>
</reference>
<reference key="3">
    <citation type="journal article" date="2005" name="Mol. Cell. Proteomics">
        <title>High throughput quantitative glycomics and glycoform-focused proteomics of murine dermis and epidermis.</title>
        <authorList>
            <person name="Uematsu R."/>
            <person name="Furukawa J."/>
            <person name="Nakagawa H."/>
            <person name="Shinohara Y."/>
            <person name="Deguchi K."/>
            <person name="Monde K."/>
            <person name="Nishimura S."/>
        </authorList>
    </citation>
    <scope>GLYCOSYLATION [LARGE SCALE ANALYSIS] AT ASN-140 AND ASN-327</scope>
    <source>
        <tissue>Epidermis</tissue>
    </source>
</reference>
<reference key="4">
    <citation type="journal article" date="2010" name="Cell">
        <title>A tissue-specific atlas of mouse protein phosphorylation and expression.</title>
        <authorList>
            <person name="Huttlin E.L."/>
            <person name="Jedrychowski M.P."/>
            <person name="Elias J.E."/>
            <person name="Goswami T."/>
            <person name="Rad R."/>
            <person name="Beausoleil S.A."/>
            <person name="Villen J."/>
            <person name="Haas W."/>
            <person name="Sowa M.E."/>
            <person name="Gygi S.P."/>
        </authorList>
    </citation>
    <scope>IDENTIFICATION BY MASS SPECTROMETRY [LARGE SCALE ANALYSIS]</scope>
    <source>
        <tissue>Brain</tissue>
        <tissue>Brown adipose tissue</tissue>
        <tissue>Heart</tissue>
        <tissue>Kidney</tissue>
        <tissue>Liver</tissue>
        <tissue>Lung</tissue>
        <tissue>Pancreas</tissue>
        <tissue>Spleen</tissue>
        <tissue>Testis</tissue>
    </source>
</reference>
<protein>
    <recommendedName>
        <fullName>Lysosomal protective protein</fullName>
        <ecNumber>3.4.16.5</ecNumber>
    </recommendedName>
    <alternativeName>
        <fullName>Carboxypeptidase C</fullName>
    </alternativeName>
    <alternativeName>
        <fullName>Carboxypeptidase L</fullName>
    </alternativeName>
    <alternativeName>
        <fullName>Cathepsin A</fullName>
    </alternativeName>
    <alternativeName>
        <fullName>Protective protein cathepsin A</fullName>
        <shortName>PPCA</shortName>
    </alternativeName>
    <alternativeName>
        <fullName>Protective protein for beta-galactosidase</fullName>
    </alternativeName>
    <component>
        <recommendedName>
            <fullName>Lysosomal protective protein 32 kDa chain</fullName>
        </recommendedName>
    </component>
    <component>
        <recommendedName>
            <fullName>Lysosomal protective protein 20 kDa chain</fullName>
        </recommendedName>
    </component>
</protein>
<feature type="signal peptide">
    <location>
        <begin position="1"/>
        <end position="23"/>
    </location>
</feature>
<feature type="chain" id="PRO_0000004277" description="Lysosomal protective protein">
    <location>
        <begin position="24"/>
        <end position="474"/>
    </location>
</feature>
<feature type="chain" id="PRO_0000004278" description="Lysosomal protective protein 32 kDa chain">
    <location>
        <begin position="24"/>
        <end position="320"/>
    </location>
</feature>
<feature type="chain" id="PRO_0000004279" description="Lysosomal protective protein 20 kDa chain">
    <location>
        <begin position="321"/>
        <end position="474"/>
    </location>
</feature>
<feature type="active site" evidence="1">
    <location>
        <position position="173"/>
    </location>
</feature>
<feature type="active site" evidence="1">
    <location>
        <position position="394"/>
    </location>
</feature>
<feature type="active site" evidence="1">
    <location>
        <position position="451"/>
    </location>
</feature>
<feature type="glycosylation site" description="N-linked (GlcNAc...) (high mannose) asparagine" evidence="4">
    <location>
        <position position="140"/>
    </location>
</feature>
<feature type="glycosylation site" description="N-linked (GlcNAc...) (high mannose) asparagine" evidence="4">
    <location>
        <position position="327"/>
    </location>
</feature>
<feature type="disulfide bond" evidence="1">
    <location>
        <begin position="83"/>
        <end position="356"/>
    </location>
</feature>
<feature type="disulfide bond" evidence="1">
    <location>
        <begin position="235"/>
        <end position="251"/>
    </location>
</feature>
<feature type="disulfide bond" evidence="1">
    <location>
        <begin position="236"/>
        <end position="241"/>
    </location>
</feature>
<feature type="disulfide bond" evidence="1">
    <location>
        <begin position="276"/>
        <end position="325"/>
    </location>
</feature>
<feature type="sequence conflict" description="In Ref. 2; AAH18534." evidence="5" ref="2">
    <original>G</original>
    <variation>W</variation>
    <location>
        <position position="425"/>
    </location>
</feature>
<proteinExistence type="evidence at protein level"/>
<name>PPGB_MOUSE</name>
<organism>
    <name type="scientific">Mus musculus</name>
    <name type="common">Mouse</name>
    <dbReference type="NCBI Taxonomy" id="10090"/>
    <lineage>
        <taxon>Eukaryota</taxon>
        <taxon>Metazoa</taxon>
        <taxon>Chordata</taxon>
        <taxon>Craniata</taxon>
        <taxon>Vertebrata</taxon>
        <taxon>Euteleostomi</taxon>
        <taxon>Mammalia</taxon>
        <taxon>Eutheria</taxon>
        <taxon>Euarchontoglires</taxon>
        <taxon>Glires</taxon>
        <taxon>Rodentia</taxon>
        <taxon>Myomorpha</taxon>
        <taxon>Muroidea</taxon>
        <taxon>Muridae</taxon>
        <taxon>Murinae</taxon>
        <taxon>Mus</taxon>
        <taxon>Mus</taxon>
    </lineage>
</organism>
<gene>
    <name type="primary">Ctsa</name>
    <name type="synonym">Ppgb</name>
</gene>